<reference key="1">
    <citation type="journal article" date="2002" name="Gene">
        <title>A human gene, ATP6E1, encoding a testis-specific isoform of H(+)-ATPase subunit E.</title>
        <authorList>
            <person name="Imai-Senga Y."/>
            <person name="Sun-Wada G.H."/>
            <person name="Wada Y."/>
            <person name="Futai M."/>
        </authorList>
    </citation>
    <scope>NUCLEOTIDE SEQUENCE [MRNA]</scope>
    <scope>TISSUE SPECIFICITY</scope>
</reference>
<reference key="2">
    <citation type="journal article" date="2004" name="Nat. Genet.">
        <title>Complete sequencing and characterization of 21,243 full-length human cDNAs.</title>
        <authorList>
            <person name="Ota T."/>
            <person name="Suzuki Y."/>
            <person name="Nishikawa T."/>
            <person name="Otsuki T."/>
            <person name="Sugiyama T."/>
            <person name="Irie R."/>
            <person name="Wakamatsu A."/>
            <person name="Hayashi K."/>
            <person name="Sato H."/>
            <person name="Nagai K."/>
            <person name="Kimura K."/>
            <person name="Makita H."/>
            <person name="Sekine M."/>
            <person name="Obayashi M."/>
            <person name="Nishi T."/>
            <person name="Shibahara T."/>
            <person name="Tanaka T."/>
            <person name="Ishii S."/>
            <person name="Yamamoto J."/>
            <person name="Saito K."/>
            <person name="Kawai Y."/>
            <person name="Isono Y."/>
            <person name="Nakamura Y."/>
            <person name="Nagahari K."/>
            <person name="Murakami K."/>
            <person name="Yasuda T."/>
            <person name="Iwayanagi T."/>
            <person name="Wagatsuma M."/>
            <person name="Shiratori A."/>
            <person name="Sudo H."/>
            <person name="Hosoiri T."/>
            <person name="Kaku Y."/>
            <person name="Kodaira H."/>
            <person name="Kondo H."/>
            <person name="Sugawara M."/>
            <person name="Takahashi M."/>
            <person name="Kanda K."/>
            <person name="Yokoi T."/>
            <person name="Furuya T."/>
            <person name="Kikkawa E."/>
            <person name="Omura Y."/>
            <person name="Abe K."/>
            <person name="Kamihara K."/>
            <person name="Katsuta N."/>
            <person name="Sato K."/>
            <person name="Tanikawa M."/>
            <person name="Yamazaki M."/>
            <person name="Ninomiya K."/>
            <person name="Ishibashi T."/>
            <person name="Yamashita H."/>
            <person name="Murakawa K."/>
            <person name="Fujimori K."/>
            <person name="Tanai H."/>
            <person name="Kimata M."/>
            <person name="Watanabe M."/>
            <person name="Hiraoka S."/>
            <person name="Chiba Y."/>
            <person name="Ishida S."/>
            <person name="Ono Y."/>
            <person name="Takiguchi S."/>
            <person name="Watanabe S."/>
            <person name="Yosida M."/>
            <person name="Hotuta T."/>
            <person name="Kusano J."/>
            <person name="Kanehori K."/>
            <person name="Takahashi-Fujii A."/>
            <person name="Hara H."/>
            <person name="Tanase T.-O."/>
            <person name="Nomura Y."/>
            <person name="Togiya S."/>
            <person name="Komai F."/>
            <person name="Hara R."/>
            <person name="Takeuchi K."/>
            <person name="Arita M."/>
            <person name="Imose N."/>
            <person name="Musashino K."/>
            <person name="Yuuki H."/>
            <person name="Oshima A."/>
            <person name="Sasaki N."/>
            <person name="Aotsuka S."/>
            <person name="Yoshikawa Y."/>
            <person name="Matsunawa H."/>
            <person name="Ichihara T."/>
            <person name="Shiohata N."/>
            <person name="Sano S."/>
            <person name="Moriya S."/>
            <person name="Momiyama H."/>
            <person name="Satoh N."/>
            <person name="Takami S."/>
            <person name="Terashima Y."/>
            <person name="Suzuki O."/>
            <person name="Nakagawa S."/>
            <person name="Senoh A."/>
            <person name="Mizoguchi H."/>
            <person name="Goto Y."/>
            <person name="Shimizu F."/>
            <person name="Wakebe H."/>
            <person name="Hishigaki H."/>
            <person name="Watanabe T."/>
            <person name="Sugiyama A."/>
            <person name="Takemoto M."/>
            <person name="Kawakami B."/>
            <person name="Yamazaki M."/>
            <person name="Watanabe K."/>
            <person name="Kumagai A."/>
            <person name="Itakura S."/>
            <person name="Fukuzumi Y."/>
            <person name="Fujimori Y."/>
            <person name="Komiyama M."/>
            <person name="Tashiro H."/>
            <person name="Tanigami A."/>
            <person name="Fujiwara T."/>
            <person name="Ono T."/>
            <person name="Yamada K."/>
            <person name="Fujii Y."/>
            <person name="Ozaki K."/>
            <person name="Hirao M."/>
            <person name="Ohmori Y."/>
            <person name="Kawabata A."/>
            <person name="Hikiji T."/>
            <person name="Kobatake N."/>
            <person name="Inagaki H."/>
            <person name="Ikema Y."/>
            <person name="Okamoto S."/>
            <person name="Okitani R."/>
            <person name="Kawakami T."/>
            <person name="Noguchi S."/>
            <person name="Itoh T."/>
            <person name="Shigeta K."/>
            <person name="Senba T."/>
            <person name="Matsumura K."/>
            <person name="Nakajima Y."/>
            <person name="Mizuno T."/>
            <person name="Morinaga M."/>
            <person name="Sasaki M."/>
            <person name="Togashi T."/>
            <person name="Oyama M."/>
            <person name="Hata H."/>
            <person name="Watanabe M."/>
            <person name="Komatsu T."/>
            <person name="Mizushima-Sugano J."/>
            <person name="Satoh T."/>
            <person name="Shirai Y."/>
            <person name="Takahashi Y."/>
            <person name="Nakagawa K."/>
            <person name="Okumura K."/>
            <person name="Nagase T."/>
            <person name="Nomura N."/>
            <person name="Kikuchi H."/>
            <person name="Masuho Y."/>
            <person name="Yamashita R."/>
            <person name="Nakai K."/>
            <person name="Yada T."/>
            <person name="Nakamura Y."/>
            <person name="Ohara O."/>
            <person name="Isogai T."/>
            <person name="Sugano S."/>
        </authorList>
    </citation>
    <scope>NUCLEOTIDE SEQUENCE [LARGE SCALE MRNA]</scope>
    <source>
        <tissue>Testis</tissue>
    </source>
</reference>
<reference key="3">
    <citation type="journal article" date="2005" name="Nature">
        <title>Generation and annotation of the DNA sequences of human chromosomes 2 and 4.</title>
        <authorList>
            <person name="Hillier L.W."/>
            <person name="Graves T.A."/>
            <person name="Fulton R.S."/>
            <person name="Fulton L.A."/>
            <person name="Pepin K.H."/>
            <person name="Minx P."/>
            <person name="Wagner-McPherson C."/>
            <person name="Layman D."/>
            <person name="Wylie K."/>
            <person name="Sekhon M."/>
            <person name="Becker M.C."/>
            <person name="Fewell G.A."/>
            <person name="Delehaunty K.D."/>
            <person name="Miner T.L."/>
            <person name="Nash W.E."/>
            <person name="Kremitzki C."/>
            <person name="Oddy L."/>
            <person name="Du H."/>
            <person name="Sun H."/>
            <person name="Bradshaw-Cordum H."/>
            <person name="Ali J."/>
            <person name="Carter J."/>
            <person name="Cordes M."/>
            <person name="Harris A."/>
            <person name="Isak A."/>
            <person name="van Brunt A."/>
            <person name="Nguyen C."/>
            <person name="Du F."/>
            <person name="Courtney L."/>
            <person name="Kalicki J."/>
            <person name="Ozersky P."/>
            <person name="Abbott S."/>
            <person name="Armstrong J."/>
            <person name="Belter E.A."/>
            <person name="Caruso L."/>
            <person name="Cedroni M."/>
            <person name="Cotton M."/>
            <person name="Davidson T."/>
            <person name="Desai A."/>
            <person name="Elliott G."/>
            <person name="Erb T."/>
            <person name="Fronick C."/>
            <person name="Gaige T."/>
            <person name="Haakenson W."/>
            <person name="Haglund K."/>
            <person name="Holmes A."/>
            <person name="Harkins R."/>
            <person name="Kim K."/>
            <person name="Kruchowski S.S."/>
            <person name="Strong C.M."/>
            <person name="Grewal N."/>
            <person name="Goyea E."/>
            <person name="Hou S."/>
            <person name="Levy A."/>
            <person name="Martinka S."/>
            <person name="Mead K."/>
            <person name="McLellan M.D."/>
            <person name="Meyer R."/>
            <person name="Randall-Maher J."/>
            <person name="Tomlinson C."/>
            <person name="Dauphin-Kohlberg S."/>
            <person name="Kozlowicz-Reilly A."/>
            <person name="Shah N."/>
            <person name="Swearengen-Shahid S."/>
            <person name="Snider J."/>
            <person name="Strong J.T."/>
            <person name="Thompson J."/>
            <person name="Yoakum M."/>
            <person name="Leonard S."/>
            <person name="Pearman C."/>
            <person name="Trani L."/>
            <person name="Radionenko M."/>
            <person name="Waligorski J.E."/>
            <person name="Wang C."/>
            <person name="Rock S.M."/>
            <person name="Tin-Wollam A.-M."/>
            <person name="Maupin R."/>
            <person name="Latreille P."/>
            <person name="Wendl M.C."/>
            <person name="Yang S.-P."/>
            <person name="Pohl C."/>
            <person name="Wallis J.W."/>
            <person name="Spieth J."/>
            <person name="Bieri T.A."/>
            <person name="Berkowicz N."/>
            <person name="Nelson J.O."/>
            <person name="Osborne J."/>
            <person name="Ding L."/>
            <person name="Meyer R."/>
            <person name="Sabo A."/>
            <person name="Shotland Y."/>
            <person name="Sinha P."/>
            <person name="Wohldmann P.E."/>
            <person name="Cook L.L."/>
            <person name="Hickenbotham M.T."/>
            <person name="Eldred J."/>
            <person name="Williams D."/>
            <person name="Jones T.A."/>
            <person name="She X."/>
            <person name="Ciccarelli F.D."/>
            <person name="Izaurralde E."/>
            <person name="Taylor J."/>
            <person name="Schmutz J."/>
            <person name="Myers R.M."/>
            <person name="Cox D.R."/>
            <person name="Huang X."/>
            <person name="McPherson J.D."/>
            <person name="Mardis E.R."/>
            <person name="Clifton S.W."/>
            <person name="Warren W.C."/>
            <person name="Chinwalla A.T."/>
            <person name="Eddy S.R."/>
            <person name="Marra M.A."/>
            <person name="Ovcharenko I."/>
            <person name="Furey T.S."/>
            <person name="Miller W."/>
            <person name="Eichler E.E."/>
            <person name="Bork P."/>
            <person name="Suyama M."/>
            <person name="Torrents D."/>
            <person name="Waterston R.H."/>
            <person name="Wilson R.K."/>
        </authorList>
    </citation>
    <scope>NUCLEOTIDE SEQUENCE [LARGE SCALE GENOMIC DNA]</scope>
</reference>
<reference key="4">
    <citation type="journal article" date="2004" name="Genome Res.">
        <title>The status, quality, and expansion of the NIH full-length cDNA project: the Mammalian Gene Collection (MGC).</title>
        <authorList>
            <consortium name="The MGC Project Team"/>
        </authorList>
    </citation>
    <scope>NUCLEOTIDE SEQUENCE [LARGE SCALE MRNA]</scope>
    <source>
        <tissue>Brain</tissue>
        <tissue>Cervix</tissue>
    </source>
</reference>
<keyword id="KW-0375">Hydrogen ion transport</keyword>
<keyword id="KW-0406">Ion transport</keyword>
<keyword id="KW-1267">Proteomics identification</keyword>
<keyword id="KW-1185">Reference proteome</keyword>
<keyword id="KW-0813">Transport</keyword>
<sequence length="226" mass="26074">MALSDVDVKKQIKHMMAFIEQEANEKAEEIDAKAEEEFNIEKGRLVQTQRLKIMEYYEKKEKQIEQQKKILMSTMRNQARLKVLRARNDLISDLLSEAKLRLSRIVEDPEVYQGLLDKLVLQGLLRLLEPVMIVRCRPQDLLLVEAAVQKAIPEYMTISQKHVEVQIDKEAYLAVNAAGGVEVYSGNQRIKVSNTLESRLDLSAKQKMPEIRMALFGANTNRKFFI</sequence>
<evidence type="ECO:0000250" key="1">
    <source>
        <dbReference type="UniProtKB" id="P36543"/>
    </source>
</evidence>
<evidence type="ECO:0000269" key="2">
    <source>
    </source>
</evidence>
<evidence type="ECO:0000305" key="3"/>
<gene>
    <name type="primary">ATP6V1E2</name>
    <name type="synonym">ATP6E1</name>
    <name type="synonym">ATP6EL2</name>
    <name type="synonym">ATP6V1EL2</name>
</gene>
<name>VATE2_HUMAN</name>
<accession>Q96A05</accession>
<proteinExistence type="evidence at protein level"/>
<protein>
    <recommendedName>
        <fullName>V-type proton ATPase subunit E 2</fullName>
        <shortName>V-ATPase subunit E 2</shortName>
    </recommendedName>
    <alternativeName>
        <fullName>Vacuolar proton pump subunit E 2</fullName>
    </alternativeName>
</protein>
<feature type="chain" id="PRO_0000282344" description="V-type proton ATPase subunit E 2">
    <location>
        <begin position="1"/>
        <end position="226"/>
    </location>
</feature>
<comment type="function">
    <text evidence="1">Subunit of the V1 complex of vacuolar(H+)-ATPase (V-ATPase), a multisubunit enzyme composed of a peripheral complex (V1) that hydrolyzes ATP and a membrane integral complex (V0) that translocates protons. V-ATPase is responsible for acidifying and maintaining the pH of intracellular compartments and in some cell types, is targeted to the plasma membrane, where it is responsible for acidifying the extracellular environment.</text>
</comment>
<comment type="subunit">
    <text evidence="1">V-ATPase is a heteromultimeric enzyme made up of two complexes: the ATP-hydrolytic V1 complex and the proton translocation V0 complex. The V1 complex consists of three catalytic AB heterodimers that form a heterohexamer, three peripheral stalks each consisting of EG heterodimers, one central rotor including subunits D and F, and the regulatory subunits C and H. The proton translocation complex V0 consists of the proton transport subunit a, a ring of proteolipid subunits c9c'', rotary subunit d, subunits e and f, and the accessory subunits ATP6AP1/Ac45 and ATP6AP2/PRR.</text>
</comment>
<comment type="interaction">
    <interactant intactId="EBI-8650380">
        <id>Q96A05</id>
    </interactant>
    <interactant intactId="EBI-711802">
        <id>O75348</id>
        <label>ATP6V1G1</label>
    </interactant>
    <organismsDiffer>false</organismsDiffer>
    <experiments>12</experiments>
</comment>
<comment type="interaction">
    <interactant intactId="EBI-8650380">
        <id>Q96A05</id>
    </interactant>
    <interactant intactId="EBI-348290">
        <id>O95670</id>
        <label>ATP6V1G2</label>
    </interactant>
    <organismsDiffer>false</organismsDiffer>
    <experiments>6</experiments>
</comment>
<comment type="interaction">
    <interactant intactId="EBI-8650380">
        <id>Q96A05</id>
    </interactant>
    <interactant intactId="EBI-752084">
        <id>Q9BUW7</id>
        <label>BBLN</label>
    </interactant>
    <organismsDiffer>false</organismsDiffer>
    <experiments>3</experiments>
</comment>
<comment type="interaction">
    <interactant intactId="EBI-8650380">
        <id>Q96A05</id>
    </interactant>
    <interactant intactId="EBI-6165891">
        <id>Q14696</id>
        <label>MESD</label>
    </interactant>
    <organismsDiffer>false</organismsDiffer>
    <experiments>3</experiments>
</comment>
<comment type="interaction">
    <interactant intactId="EBI-8650380">
        <id>Q96A05</id>
    </interactant>
    <interactant intactId="EBI-6912267">
        <id>A6NK89</id>
        <label>RASSF10</label>
    </interactant>
    <organismsDiffer>false</organismsDiffer>
    <experiments>3</experiments>
</comment>
<comment type="tissue specificity">
    <text evidence="2">Testis specific.</text>
</comment>
<comment type="similarity">
    <text evidence="3">Belongs to the V-ATPase E subunit family.</text>
</comment>
<organism>
    <name type="scientific">Homo sapiens</name>
    <name type="common">Human</name>
    <dbReference type="NCBI Taxonomy" id="9606"/>
    <lineage>
        <taxon>Eukaryota</taxon>
        <taxon>Metazoa</taxon>
        <taxon>Chordata</taxon>
        <taxon>Craniata</taxon>
        <taxon>Vertebrata</taxon>
        <taxon>Euteleostomi</taxon>
        <taxon>Mammalia</taxon>
        <taxon>Eutheria</taxon>
        <taxon>Euarchontoglires</taxon>
        <taxon>Primates</taxon>
        <taxon>Haplorrhini</taxon>
        <taxon>Catarrhini</taxon>
        <taxon>Hominidae</taxon>
        <taxon>Homo</taxon>
    </lineage>
</organism>
<dbReference type="EMBL" id="AB074759">
    <property type="protein sequence ID" value="BAC00847.1"/>
    <property type="molecule type" value="mRNA"/>
</dbReference>
<dbReference type="EMBL" id="AK058055">
    <property type="protein sequence ID" value="BAB71643.1"/>
    <property type="molecule type" value="mRNA"/>
</dbReference>
<dbReference type="EMBL" id="AC018682">
    <property type="protein sequence ID" value="AAY14833.1"/>
    <property type="molecule type" value="Genomic_DNA"/>
</dbReference>
<dbReference type="EMBL" id="BC008981">
    <property type="protein sequence ID" value="AAH08981.1"/>
    <property type="molecule type" value="mRNA"/>
</dbReference>
<dbReference type="EMBL" id="BC034808">
    <property type="protein sequence ID" value="AAH34808.1"/>
    <property type="molecule type" value="mRNA"/>
</dbReference>
<dbReference type="CCDS" id="CCDS1826.1"/>
<dbReference type="RefSeq" id="NP_001304992.1">
    <property type="nucleotide sequence ID" value="NM_001318063.2"/>
</dbReference>
<dbReference type="RefSeq" id="NP_001358210.1">
    <property type="nucleotide sequence ID" value="NM_001371281.1"/>
</dbReference>
<dbReference type="RefSeq" id="NP_001358211.1">
    <property type="nucleotide sequence ID" value="NM_001371282.1"/>
</dbReference>
<dbReference type="RefSeq" id="NP_001358212.1">
    <property type="nucleotide sequence ID" value="NM_001371283.1"/>
</dbReference>
<dbReference type="RefSeq" id="XP_005264690.1">
    <property type="nucleotide sequence ID" value="XM_005264633.2"/>
</dbReference>
<dbReference type="RefSeq" id="XP_005264691.1">
    <property type="nucleotide sequence ID" value="XM_005264634.2"/>
</dbReference>
<dbReference type="RefSeq" id="XP_011531450.1">
    <property type="nucleotide sequence ID" value="XM_011533148.4"/>
</dbReference>
<dbReference type="RefSeq" id="XP_011531451.1">
    <property type="nucleotide sequence ID" value="XM_011533149.4"/>
</dbReference>
<dbReference type="RefSeq" id="XP_011531452.1">
    <property type="nucleotide sequence ID" value="XM_011533150.2"/>
</dbReference>
<dbReference type="RefSeq" id="XP_011531453.1">
    <property type="nucleotide sequence ID" value="XM_011533151.4"/>
</dbReference>
<dbReference type="RefSeq" id="XP_011531454.1">
    <property type="nucleotide sequence ID" value="XM_011533152.4"/>
</dbReference>
<dbReference type="RefSeq" id="XP_011531455.1">
    <property type="nucleotide sequence ID" value="XM_011533153.2"/>
</dbReference>
<dbReference type="RefSeq" id="XP_016860714.1">
    <property type="nucleotide sequence ID" value="XM_017005225.2"/>
</dbReference>
<dbReference type="RefSeq" id="XP_016860715.1">
    <property type="nucleotide sequence ID" value="XM_017005226.1"/>
</dbReference>
<dbReference type="RefSeq" id="XP_047302211.1">
    <property type="nucleotide sequence ID" value="XM_047446255.1"/>
</dbReference>
<dbReference type="RefSeq" id="XP_047302212.1">
    <property type="nucleotide sequence ID" value="XM_047446256.1"/>
</dbReference>
<dbReference type="RefSeq" id="XP_047302213.1">
    <property type="nucleotide sequence ID" value="XM_047446257.1"/>
</dbReference>
<dbReference type="RefSeq" id="XP_054200419.1">
    <property type="nucleotide sequence ID" value="XM_054344444.1"/>
</dbReference>
<dbReference type="RefSeq" id="XP_054200420.1">
    <property type="nucleotide sequence ID" value="XM_054344445.1"/>
</dbReference>
<dbReference type="RefSeq" id="XP_054200421.1">
    <property type="nucleotide sequence ID" value="XM_054344446.1"/>
</dbReference>
<dbReference type="RefSeq" id="XP_054200422.1">
    <property type="nucleotide sequence ID" value="XM_054344447.1"/>
</dbReference>
<dbReference type="RefSeq" id="XP_054200423.1">
    <property type="nucleotide sequence ID" value="XM_054344448.1"/>
</dbReference>
<dbReference type="RefSeq" id="XP_054200424.1">
    <property type="nucleotide sequence ID" value="XM_054344449.1"/>
</dbReference>
<dbReference type="RefSeq" id="XP_054200425.1">
    <property type="nucleotide sequence ID" value="XM_054344450.1"/>
</dbReference>
<dbReference type="RefSeq" id="XP_054200426.1">
    <property type="nucleotide sequence ID" value="XM_054344451.1"/>
</dbReference>
<dbReference type="SMR" id="Q96A05"/>
<dbReference type="BioGRID" id="124715">
    <property type="interactions" value="28"/>
</dbReference>
<dbReference type="ComplexPortal" id="CPX-2470">
    <property type="entry name" value="Vacuolar proton translocating ATPase complex, ATP6V0A1 variant"/>
</dbReference>
<dbReference type="ComplexPortal" id="CPX-6904">
    <property type="entry name" value="Vacuolar proton translocating ATPase complex, ATP6V0A2 variant"/>
</dbReference>
<dbReference type="ComplexPortal" id="CPX-6905">
    <property type="entry name" value="Vacuolar proton translocating ATPase complex, ATP6V0A3 variant"/>
</dbReference>
<dbReference type="ComplexPortal" id="CPX-6912">
    <property type="entry name" value="Vacuolar proton translocating ATPase complex, ATP6V0A4 variant"/>
</dbReference>
<dbReference type="FunCoup" id="Q96A05">
    <property type="interactions" value="1320"/>
</dbReference>
<dbReference type="IntAct" id="Q96A05">
    <property type="interactions" value="8"/>
</dbReference>
<dbReference type="MINT" id="Q96A05"/>
<dbReference type="STRING" id="9606.ENSP00000304891"/>
<dbReference type="DrugBank" id="DB01133">
    <property type="generic name" value="Tiludronic acid"/>
</dbReference>
<dbReference type="iPTMnet" id="Q96A05"/>
<dbReference type="PhosphoSitePlus" id="Q96A05"/>
<dbReference type="BioMuta" id="ATP6V1E2"/>
<dbReference type="DMDM" id="74731076"/>
<dbReference type="jPOST" id="Q96A05"/>
<dbReference type="MassIVE" id="Q96A05"/>
<dbReference type="PaxDb" id="9606-ENSP00000304891"/>
<dbReference type="PeptideAtlas" id="Q96A05"/>
<dbReference type="ProteomicsDB" id="75888"/>
<dbReference type="Antibodypedia" id="51230">
    <property type="antibodies" value="105 antibodies from 21 providers"/>
</dbReference>
<dbReference type="DNASU" id="90423"/>
<dbReference type="Ensembl" id="ENST00000306448.4">
    <property type="protein sequence ID" value="ENSP00000304891.4"/>
    <property type="gene ID" value="ENSG00000250565.7"/>
</dbReference>
<dbReference type="Ensembl" id="ENST00000522587.6">
    <property type="protein sequence ID" value="ENSP00000428141.1"/>
    <property type="gene ID" value="ENSG00000250565.7"/>
</dbReference>
<dbReference type="GeneID" id="90423"/>
<dbReference type="KEGG" id="hsa:90423"/>
<dbReference type="MANE-Select" id="ENST00000522587.6">
    <property type="protein sequence ID" value="ENSP00000428141.1"/>
    <property type="RefSeq nucleotide sequence ID" value="NM_001318063.2"/>
    <property type="RefSeq protein sequence ID" value="NP_001304992.1"/>
</dbReference>
<dbReference type="UCSC" id="uc002ruy.3">
    <property type="organism name" value="human"/>
</dbReference>
<dbReference type="AGR" id="HGNC:18125"/>
<dbReference type="CTD" id="90423"/>
<dbReference type="DisGeNET" id="90423"/>
<dbReference type="GeneCards" id="ATP6V1E2"/>
<dbReference type="HGNC" id="HGNC:18125">
    <property type="gene designation" value="ATP6V1E2"/>
</dbReference>
<dbReference type="HPA" id="ENSG00000250565">
    <property type="expression patterns" value="Tissue enriched (testis)"/>
</dbReference>
<dbReference type="MIM" id="617385">
    <property type="type" value="gene"/>
</dbReference>
<dbReference type="neXtProt" id="NX_Q96A05"/>
<dbReference type="OpenTargets" id="ENSG00000250565"/>
<dbReference type="PharmGKB" id="PA25159"/>
<dbReference type="VEuPathDB" id="HostDB:ENSG00000250565"/>
<dbReference type="eggNOG" id="KOG1664">
    <property type="taxonomic scope" value="Eukaryota"/>
</dbReference>
<dbReference type="GeneTree" id="ENSGT00390000002730"/>
<dbReference type="HOGENOM" id="CLU_073641_2_0_1"/>
<dbReference type="InParanoid" id="Q96A05"/>
<dbReference type="OMA" id="CRPQDHL"/>
<dbReference type="OrthoDB" id="10263003at2759"/>
<dbReference type="PAN-GO" id="Q96A05">
    <property type="GO annotations" value="1 GO annotation based on evolutionary models"/>
</dbReference>
<dbReference type="PhylomeDB" id="Q96A05"/>
<dbReference type="TreeFam" id="TF313479"/>
<dbReference type="BioCyc" id="MetaCyc:HS10256-MONOMER"/>
<dbReference type="PathwayCommons" id="Q96A05"/>
<dbReference type="Reactome" id="R-HSA-1222556">
    <property type="pathway name" value="ROS and RNS production in phagocytes"/>
</dbReference>
<dbReference type="Reactome" id="R-HSA-77387">
    <property type="pathway name" value="Insulin receptor recycling"/>
</dbReference>
<dbReference type="Reactome" id="R-HSA-917977">
    <property type="pathway name" value="Transferrin endocytosis and recycling"/>
</dbReference>
<dbReference type="Reactome" id="R-HSA-9639288">
    <property type="pathway name" value="Amino acids regulate mTORC1"/>
</dbReference>
<dbReference type="Reactome" id="R-HSA-983712">
    <property type="pathway name" value="Ion channel transport"/>
</dbReference>
<dbReference type="SignaLink" id="Q96A05"/>
<dbReference type="SIGNOR" id="Q96A05"/>
<dbReference type="BioGRID-ORCS" id="90423">
    <property type="hits" value="12 hits in 1152 CRISPR screens"/>
</dbReference>
<dbReference type="ChiTaRS" id="ATP6V1E2">
    <property type="organism name" value="human"/>
</dbReference>
<dbReference type="GeneWiki" id="ATP6V1E2"/>
<dbReference type="GenomeRNAi" id="90423"/>
<dbReference type="Pharos" id="Q96A05">
    <property type="development level" value="Tbio"/>
</dbReference>
<dbReference type="PRO" id="PR:Q96A05"/>
<dbReference type="Proteomes" id="UP000005640">
    <property type="component" value="Chromosome 2"/>
</dbReference>
<dbReference type="RNAct" id="Q96A05">
    <property type="molecule type" value="protein"/>
</dbReference>
<dbReference type="Bgee" id="ENSG00000250565">
    <property type="expression patterns" value="Expressed in sperm and 140 other cell types or tissues"/>
</dbReference>
<dbReference type="ExpressionAtlas" id="Q96A05">
    <property type="expression patterns" value="baseline and differential"/>
</dbReference>
<dbReference type="GO" id="GO:0001669">
    <property type="term" value="C:acrosomal vesicle"/>
    <property type="evidence" value="ECO:0007669"/>
    <property type="project" value="Ensembl"/>
</dbReference>
<dbReference type="GO" id="GO:0005829">
    <property type="term" value="C:cytosol"/>
    <property type="evidence" value="ECO:0000304"/>
    <property type="project" value="Reactome"/>
</dbReference>
<dbReference type="GO" id="GO:0033178">
    <property type="term" value="C:proton-transporting two-sector ATPase complex, catalytic domain"/>
    <property type="evidence" value="ECO:0007669"/>
    <property type="project" value="InterPro"/>
</dbReference>
<dbReference type="GO" id="GO:0046961">
    <property type="term" value="F:proton-transporting ATPase activity, rotational mechanism"/>
    <property type="evidence" value="ECO:0000318"/>
    <property type="project" value="GO_Central"/>
</dbReference>
<dbReference type="GO" id="GO:0016241">
    <property type="term" value="P:regulation of macroautophagy"/>
    <property type="evidence" value="ECO:0000303"/>
    <property type="project" value="ParkinsonsUK-UCL"/>
</dbReference>
<dbReference type="FunFam" id="3.30.2320.30:FF:000001">
    <property type="entry name" value="V-type proton atpase subunit e 1"/>
    <property type="match status" value="1"/>
</dbReference>
<dbReference type="Gene3D" id="6.10.250.1620">
    <property type="match status" value="1"/>
</dbReference>
<dbReference type="Gene3D" id="3.30.2320.30">
    <property type="entry name" value="ATP synthase, E subunit, C-terminal"/>
    <property type="match status" value="1"/>
</dbReference>
<dbReference type="HAMAP" id="MF_00311">
    <property type="entry name" value="ATP_synth_E_arch"/>
    <property type="match status" value="1"/>
</dbReference>
<dbReference type="InterPro" id="IPR038495">
    <property type="entry name" value="ATPase_E_C"/>
</dbReference>
<dbReference type="InterPro" id="IPR002842">
    <property type="entry name" value="ATPase_V1_Esu"/>
</dbReference>
<dbReference type="PANTHER" id="PTHR45715">
    <property type="entry name" value="ATPASE H+-TRANSPORTING V1 SUBUNIT E1A-RELATED"/>
    <property type="match status" value="1"/>
</dbReference>
<dbReference type="Pfam" id="PF01991">
    <property type="entry name" value="vATP-synt_E"/>
    <property type="match status" value="1"/>
</dbReference>
<dbReference type="SUPFAM" id="SSF160527">
    <property type="entry name" value="V-type ATPase subunit E-like"/>
    <property type="match status" value="1"/>
</dbReference>